<organism>
    <name type="scientific">Human herpesvirus 6B (strain Z29)</name>
    <name type="common">HHV-6 variant B</name>
    <name type="synonym">Human B lymphotropic virus</name>
    <dbReference type="NCBI Taxonomy" id="36351"/>
    <lineage>
        <taxon>Viruses</taxon>
        <taxon>Duplodnaviria</taxon>
        <taxon>Heunggongvirae</taxon>
        <taxon>Peploviricota</taxon>
        <taxon>Herviviricetes</taxon>
        <taxon>Herpesvirales</taxon>
        <taxon>Orthoherpesviridae</taxon>
        <taxon>Betaherpesvirinae</taxon>
        <taxon>Roseolovirus</taxon>
        <taxon>Roseolovirus humanbeta6b</taxon>
        <taxon>Human herpesvirus 6B</taxon>
    </lineage>
</organism>
<gene>
    <name evidence="1" type="primary">gH</name>
    <name type="synonym">KA9L</name>
    <name type="synonym">U48</name>
</gene>
<comment type="function">
    <text evidence="1">The heterodimer glycoprotein H-glycoprotein L is required for the fusion of viral and plasma membranes leading to virus entry into the host cell. Following initial binding to host receptor, membrane fusion is mediated by the fusion machinery composed of gB and the heterodimer gH/gL. May also be involved in the fusion between the virion envelope and the outer nuclear membrane during virion morphogenesis.</text>
</comment>
<comment type="subunit">
    <text evidence="1">Interacts with glycoprotein L (gL); this interaction is necessary for the correct processing and cell surface expression of gH. The heterodimer gH/gL seems to interact with gB trimers during fusion.</text>
</comment>
<comment type="subcellular location">
    <subcellularLocation>
        <location evidence="1">Virion membrane</location>
        <topology evidence="1">Single-pass type I membrane protein</topology>
    </subcellularLocation>
    <subcellularLocation>
        <location evidence="1">Host cell membrane</location>
        <topology evidence="1">Single-pass type I membrane protein</topology>
    </subcellularLocation>
    <subcellularLocation>
        <location evidence="1">Host endosome membrane</location>
        <topology evidence="1">Single-pass type I membrane protein</topology>
    </subcellularLocation>
    <text evidence="1">During virion morphogenesis, this protein probably accumulates in the endosomes and trans-Golgi where secondary envelopment occurs. It is probably transported to the cell surface from where it is endocytosed and directed to the trans-Golgi network (TGN).</text>
</comment>
<comment type="PTM">
    <text evidence="1">N-glycosylated, O-glycosylated, and sialylated.</text>
</comment>
<comment type="similarity">
    <text evidence="1">Belongs to the herpesviridae glycoprotein H family.</text>
</comment>
<sequence length="694" mass="79574">MLFRLWVFVLLTPCYSWRPWTISDESHCKNGNSENPIVRPGFITFNFYTKNDTRIYQVPKCLLGSDITYHLFDAINTTESLTNYEKRVTRFYEPPMNDILRLSTVPAVKQFNLDHSIQPQIVYSLNLYPSHGIYYIRVVEVRQMQYDNVSCKLPNSLNELIFPVQVRCAKITRYAGENIYTHFFTPDFMILYIQNPAGDLTMMYGNTTDINFKAPYRKSSFIFKQTLTDDLLLIVEKDVVDEEYRFISDATFVDETLDDVDEVEALLLKFNNLGIQTLLRGDCKKPDYAGIPQMMFLYGIVHFSYSTKNTGPMPVLRVLKTHENLLSIDSFVNRCVNVSEGTIQYPKMKEFLKYEPSDYSYITKNKSIPVSTLLTYLATAYETNVTISRYKWSDIANTLQKIYEKHMFFTNLTFSDRETLFMLAEIANFIPADERMQRHMQLLIGNLCNPVEIVSWAHMLTADKAPNLENIYSPCASPVRRDVTNSFVKTVLTYASLDRYRSDMMEMLSVYRPPDMARVAAIQCLSPSEPAASLPLPNVTFVISPSYVIKGVSLTITTTIVATSIIITAIPLNSTCVSTNYKYAGQDLLVLRNISSQTCEFCQSVVMEYDDIDGPLQYIYIKNIDELKTLTDPNNNLLVPNTRTHYLLLAKNGSVFEMSEVGIDIDQVSIILVIIYVLIAIIALFGLYRLIRLC</sequence>
<proteinExistence type="inferred from homology"/>
<evidence type="ECO:0000255" key="1">
    <source>
        <dbReference type="HAMAP-Rule" id="MF_04033"/>
    </source>
</evidence>
<reference key="1">
    <citation type="journal article" date="1995" name="J. Virol.">
        <title>Intragenomic linear amplification of human herpesvirus 6B oriLyt suggests acquisition of oriLyt by transposition.</title>
        <authorList>
            <person name="Stamey F.R."/>
            <person name="Dominguez G."/>
            <person name="Black J.B."/>
            <person name="Dambaugh T.R."/>
            <person name="Pellett P.E."/>
        </authorList>
    </citation>
    <scope>NUCLEOTIDE SEQUENCE [GENOMIC DNA]</scope>
</reference>
<reference key="2">
    <citation type="journal article" date="1999" name="J. Virol.">
        <title>Human herpesvirus 6B genome sequence: coding content and comparison with human herpesvirus 6A.</title>
        <authorList>
            <person name="Dominguez G."/>
            <person name="Dambaugh T.R."/>
            <person name="Stamey F.R."/>
            <person name="Dewhurst S."/>
            <person name="Inoue N."/>
            <person name="Pellett P.E."/>
        </authorList>
    </citation>
    <scope>NUCLEOTIDE SEQUENCE [LARGE SCALE GENOMIC DNA]</scope>
</reference>
<feature type="signal peptide" evidence="1">
    <location>
        <begin position="1"/>
        <end position="16"/>
    </location>
</feature>
<feature type="chain" id="PRO_0000436660" description="Envelope glycoprotein H" evidence="1">
    <location>
        <begin position="17"/>
        <end position="694"/>
    </location>
</feature>
<feature type="topological domain" description="Virion surface" evidence="1">
    <location>
        <begin position="17"/>
        <end position="671"/>
    </location>
</feature>
<feature type="transmembrane region" description="Helical" evidence="1">
    <location>
        <begin position="672"/>
        <end position="692"/>
    </location>
</feature>
<feature type="topological domain" description="Intravirion" evidence="1">
    <location>
        <begin position="693"/>
        <end position="694"/>
    </location>
</feature>
<feature type="region of interest" description="Interaction with gL" evidence="1">
    <location>
        <begin position="174"/>
        <end position="234"/>
    </location>
</feature>
<feature type="glycosylation site" description="N-linked (GlcNAc...) asparagine; by host" evidence="1">
    <location>
        <position position="51"/>
    </location>
</feature>
<feature type="glycosylation site" description="N-linked (GlcNAc...) asparagine; by host" evidence="1">
    <location>
        <position position="76"/>
    </location>
</feature>
<feature type="glycosylation site" description="N-linked (GlcNAc...) asparagine; by host" evidence="1">
    <location>
        <position position="148"/>
    </location>
</feature>
<feature type="glycosylation site" description="N-linked (GlcNAc...) asparagine; by host" evidence="1">
    <location>
        <position position="206"/>
    </location>
</feature>
<feature type="glycosylation site" description="N-linked (GlcNAc...) asparagine; by host" evidence="1">
    <location>
        <position position="337"/>
    </location>
</feature>
<feature type="glycosylation site" description="N-linked (GlcNAc...) asparagine; by host" evidence="1">
    <location>
        <position position="365"/>
    </location>
</feature>
<feature type="glycosylation site" description="N-linked (GlcNAc...) asparagine; by host" evidence="1">
    <location>
        <position position="384"/>
    </location>
</feature>
<feature type="glycosylation site" description="N-linked (GlcNAc...) asparagine; by host" evidence="1">
    <location>
        <position position="411"/>
    </location>
</feature>
<feature type="glycosylation site" description="N-linked (GlcNAc...) asparagine; by host" evidence="1">
    <location>
        <position position="538"/>
    </location>
</feature>
<feature type="glycosylation site" description="N-linked (GlcNAc...) asparagine; by host" evidence="1">
    <location>
        <position position="573"/>
    </location>
</feature>
<feature type="glycosylation site" description="N-linked (GlcNAc...) asparagine; by host" evidence="1">
    <location>
        <position position="593"/>
    </location>
</feature>
<feature type="glycosylation site" description="N-linked (GlcNAc...) asparagine; by host" evidence="1">
    <location>
        <position position="652"/>
    </location>
</feature>
<organismHost>
    <name type="scientific">Homo sapiens</name>
    <name type="common">Human</name>
    <dbReference type="NCBI Taxonomy" id="9606"/>
</organismHost>
<keyword id="KW-1169">Fusion of virus membrane with host cell membrane</keyword>
<keyword id="KW-1168">Fusion of virus membrane with host membrane</keyword>
<keyword id="KW-0325">Glycoprotein</keyword>
<keyword id="KW-1032">Host cell membrane</keyword>
<keyword id="KW-1039">Host endosome</keyword>
<keyword id="KW-1043">Host membrane</keyword>
<keyword id="KW-0472">Membrane</keyword>
<keyword id="KW-1185">Reference proteome</keyword>
<keyword id="KW-0730">Sialic acid</keyword>
<keyword id="KW-0732">Signal</keyword>
<keyword id="KW-0812">Transmembrane</keyword>
<keyword id="KW-1133">Transmembrane helix</keyword>
<keyword id="KW-0261">Viral envelope protein</keyword>
<keyword id="KW-1162">Viral penetration into host cytoplasm</keyword>
<keyword id="KW-0946">Virion</keyword>
<keyword id="KW-1160">Virus entry into host cell</keyword>
<name>GH_HHV6Z</name>
<protein>
    <recommendedName>
        <fullName evidence="1">Envelope glycoprotein H</fullName>
        <shortName evidence="1">gH</shortName>
    </recommendedName>
</protein>
<accession>P52543</accession>
<dbReference type="EMBL" id="AF157706">
    <property type="protein sequence ID" value="AAB06346.1"/>
    <property type="molecule type" value="Genomic_DNA"/>
</dbReference>
<dbReference type="PIR" id="T44195">
    <property type="entry name" value="T44195"/>
</dbReference>
<dbReference type="RefSeq" id="NP_050229.1">
    <property type="nucleotide sequence ID" value="NC_000898.1"/>
</dbReference>
<dbReference type="SMR" id="P52543"/>
<dbReference type="GlyCosmos" id="P52543">
    <property type="glycosylation" value="12 sites, No reported glycans"/>
</dbReference>
<dbReference type="ABCD" id="P52543">
    <property type="antibodies" value="1 sequenced antibody"/>
</dbReference>
<dbReference type="DNASU" id="1497050"/>
<dbReference type="GeneID" id="1497050"/>
<dbReference type="KEGG" id="vg:1497050"/>
<dbReference type="Proteomes" id="UP000006930">
    <property type="component" value="Segment"/>
</dbReference>
<dbReference type="GO" id="GO:0044175">
    <property type="term" value="C:host cell endosome membrane"/>
    <property type="evidence" value="ECO:0007669"/>
    <property type="project" value="UniProtKB-SubCell"/>
</dbReference>
<dbReference type="GO" id="GO:0020002">
    <property type="term" value="C:host cell plasma membrane"/>
    <property type="evidence" value="ECO:0007669"/>
    <property type="project" value="UniProtKB-SubCell"/>
</dbReference>
<dbReference type="GO" id="GO:0016020">
    <property type="term" value="C:membrane"/>
    <property type="evidence" value="ECO:0007669"/>
    <property type="project" value="UniProtKB-KW"/>
</dbReference>
<dbReference type="GO" id="GO:0019031">
    <property type="term" value="C:viral envelope"/>
    <property type="evidence" value="ECO:0007669"/>
    <property type="project" value="UniProtKB-KW"/>
</dbReference>
<dbReference type="GO" id="GO:0055036">
    <property type="term" value="C:virion membrane"/>
    <property type="evidence" value="ECO:0007669"/>
    <property type="project" value="UniProtKB-SubCell"/>
</dbReference>
<dbReference type="GO" id="GO:0019064">
    <property type="term" value="P:fusion of virus membrane with host plasma membrane"/>
    <property type="evidence" value="ECO:0007669"/>
    <property type="project" value="UniProtKB-KW"/>
</dbReference>
<dbReference type="GO" id="GO:0046718">
    <property type="term" value="P:symbiont entry into host cell"/>
    <property type="evidence" value="ECO:0007669"/>
    <property type="project" value="UniProtKB-KW"/>
</dbReference>
<dbReference type="Gene3D" id="2.60.40.3190">
    <property type="entry name" value="Herpesvirus glycoprotein H, C-terminal domain"/>
    <property type="match status" value="1"/>
</dbReference>
<dbReference type="HAMAP" id="MF_04033">
    <property type="entry name" value="HSV_GH"/>
    <property type="match status" value="1"/>
</dbReference>
<dbReference type="InterPro" id="IPR003493">
    <property type="entry name" value="Herpes_gH"/>
</dbReference>
<dbReference type="InterPro" id="IPR035305">
    <property type="entry name" value="Herpes_glycoH_C"/>
</dbReference>
<dbReference type="InterPro" id="IPR038172">
    <property type="entry name" value="Herpes_glycoH_C_sf"/>
</dbReference>
<dbReference type="Pfam" id="PF17488">
    <property type="entry name" value="Herpes_glycoH_C"/>
    <property type="match status" value="1"/>
</dbReference>
<dbReference type="Pfam" id="PF02489">
    <property type="entry name" value="Herpes_glycop_H"/>
    <property type="match status" value="1"/>
</dbReference>